<name>MDTK_YERE8</name>
<accession>A1JPA1</accession>
<keyword id="KW-0050">Antiport</keyword>
<keyword id="KW-0997">Cell inner membrane</keyword>
<keyword id="KW-1003">Cell membrane</keyword>
<keyword id="KW-0406">Ion transport</keyword>
<keyword id="KW-0472">Membrane</keyword>
<keyword id="KW-0915">Sodium</keyword>
<keyword id="KW-0739">Sodium transport</keyword>
<keyword id="KW-0812">Transmembrane</keyword>
<keyword id="KW-1133">Transmembrane helix</keyword>
<keyword id="KW-0813">Transport</keyword>
<evidence type="ECO:0000255" key="1">
    <source>
        <dbReference type="HAMAP-Rule" id="MF_00400"/>
    </source>
</evidence>
<organism>
    <name type="scientific">Yersinia enterocolitica serotype O:8 / biotype 1B (strain NCTC 13174 / 8081)</name>
    <dbReference type="NCBI Taxonomy" id="393305"/>
    <lineage>
        <taxon>Bacteria</taxon>
        <taxon>Pseudomonadati</taxon>
        <taxon>Pseudomonadota</taxon>
        <taxon>Gammaproteobacteria</taxon>
        <taxon>Enterobacterales</taxon>
        <taxon>Yersiniaceae</taxon>
        <taxon>Yersinia</taxon>
    </lineage>
</organism>
<dbReference type="EMBL" id="AM286415">
    <property type="protein sequence ID" value="CAL12233.1"/>
    <property type="molecule type" value="Genomic_DNA"/>
</dbReference>
<dbReference type="RefSeq" id="WP_011816381.1">
    <property type="nucleotide sequence ID" value="NC_008800.1"/>
</dbReference>
<dbReference type="RefSeq" id="YP_001006403.1">
    <property type="nucleotide sequence ID" value="NC_008800.1"/>
</dbReference>
<dbReference type="SMR" id="A1JPA1"/>
<dbReference type="KEGG" id="yen:YE2163"/>
<dbReference type="PATRIC" id="fig|393305.7.peg.2328"/>
<dbReference type="eggNOG" id="COG0534">
    <property type="taxonomic scope" value="Bacteria"/>
</dbReference>
<dbReference type="HOGENOM" id="CLU_012893_6_0_6"/>
<dbReference type="OrthoDB" id="9780160at2"/>
<dbReference type="Proteomes" id="UP000000642">
    <property type="component" value="Chromosome"/>
</dbReference>
<dbReference type="GO" id="GO:0005886">
    <property type="term" value="C:plasma membrane"/>
    <property type="evidence" value="ECO:0007669"/>
    <property type="project" value="UniProtKB-SubCell"/>
</dbReference>
<dbReference type="GO" id="GO:0015297">
    <property type="term" value="F:antiporter activity"/>
    <property type="evidence" value="ECO:0007669"/>
    <property type="project" value="UniProtKB-UniRule"/>
</dbReference>
<dbReference type="GO" id="GO:0042910">
    <property type="term" value="F:xenobiotic transmembrane transporter activity"/>
    <property type="evidence" value="ECO:0007669"/>
    <property type="project" value="UniProtKB-UniRule"/>
</dbReference>
<dbReference type="GO" id="GO:0006814">
    <property type="term" value="P:sodium ion transport"/>
    <property type="evidence" value="ECO:0007669"/>
    <property type="project" value="UniProtKB-UniRule"/>
</dbReference>
<dbReference type="GO" id="GO:0006855">
    <property type="term" value="P:xenobiotic transmembrane transport"/>
    <property type="evidence" value="ECO:0007669"/>
    <property type="project" value="UniProtKB-UniRule"/>
</dbReference>
<dbReference type="CDD" id="cd13131">
    <property type="entry name" value="MATE_NorM_like"/>
    <property type="match status" value="1"/>
</dbReference>
<dbReference type="HAMAP" id="MF_00400">
    <property type="entry name" value="MdtK"/>
    <property type="match status" value="1"/>
</dbReference>
<dbReference type="InterPro" id="IPR002528">
    <property type="entry name" value="MATE_fam"/>
</dbReference>
<dbReference type="InterPro" id="IPR050222">
    <property type="entry name" value="MATE_MdtK"/>
</dbReference>
<dbReference type="InterPro" id="IPR048279">
    <property type="entry name" value="MdtK-like"/>
</dbReference>
<dbReference type="InterPro" id="IPR022913">
    <property type="entry name" value="Multidrug-R_MdtK"/>
</dbReference>
<dbReference type="NCBIfam" id="TIGR00797">
    <property type="entry name" value="matE"/>
    <property type="match status" value="1"/>
</dbReference>
<dbReference type="PANTHER" id="PTHR43298:SF2">
    <property type="entry name" value="FMN_FAD EXPORTER YEEO-RELATED"/>
    <property type="match status" value="1"/>
</dbReference>
<dbReference type="PANTHER" id="PTHR43298">
    <property type="entry name" value="MULTIDRUG RESISTANCE PROTEIN NORM-RELATED"/>
    <property type="match status" value="1"/>
</dbReference>
<dbReference type="Pfam" id="PF01554">
    <property type="entry name" value="MatE"/>
    <property type="match status" value="2"/>
</dbReference>
<dbReference type="PIRSF" id="PIRSF006603">
    <property type="entry name" value="DinF"/>
    <property type="match status" value="1"/>
</dbReference>
<proteinExistence type="inferred from homology"/>
<protein>
    <recommendedName>
        <fullName evidence="1">Multidrug resistance protein MdtK</fullName>
    </recommendedName>
    <alternativeName>
        <fullName evidence="1">Multidrug-efflux transporter</fullName>
    </alternativeName>
</protein>
<gene>
    <name evidence="1" type="primary">mdtK</name>
    <name type="ordered locus">YE2163</name>
</gene>
<feature type="chain" id="PRO_1000049615" description="Multidrug resistance protein MdtK">
    <location>
        <begin position="1"/>
        <end position="457"/>
    </location>
</feature>
<feature type="transmembrane region" description="Helical" evidence="1">
    <location>
        <begin position="11"/>
        <end position="31"/>
    </location>
</feature>
<feature type="transmembrane region" description="Helical" evidence="1">
    <location>
        <begin position="46"/>
        <end position="66"/>
    </location>
</feature>
<feature type="transmembrane region" description="Helical" evidence="1">
    <location>
        <begin position="93"/>
        <end position="113"/>
    </location>
</feature>
<feature type="transmembrane region" description="Helical" evidence="1">
    <location>
        <begin position="127"/>
        <end position="147"/>
    </location>
</feature>
<feature type="transmembrane region" description="Helical" evidence="1">
    <location>
        <begin position="160"/>
        <end position="180"/>
    </location>
</feature>
<feature type="transmembrane region" description="Helical" evidence="1">
    <location>
        <begin position="188"/>
        <end position="208"/>
    </location>
</feature>
<feature type="transmembrane region" description="Helical" evidence="1">
    <location>
        <begin position="243"/>
        <end position="263"/>
    </location>
</feature>
<feature type="transmembrane region" description="Helical" evidence="1">
    <location>
        <begin position="278"/>
        <end position="300"/>
    </location>
</feature>
<feature type="transmembrane region" description="Helical" evidence="1">
    <location>
        <begin position="316"/>
        <end position="336"/>
    </location>
</feature>
<feature type="transmembrane region" description="Helical" evidence="1">
    <location>
        <begin position="350"/>
        <end position="370"/>
    </location>
</feature>
<feature type="transmembrane region" description="Helical" evidence="1">
    <location>
        <begin position="387"/>
        <end position="407"/>
    </location>
</feature>
<feature type="transmembrane region" description="Helical" evidence="1">
    <location>
        <begin position="418"/>
        <end position="438"/>
    </location>
</feature>
<sequence>MQKYIVEARSLLALAIPVVIAQLSQTAMGVVDTIMAGSVSATDMAAVAVGTSIWLPAILFGHGLLLALTPTVAQLNGSGRRNQIAHQVRQGFWLAFCVSVLIMVVIYNSDHIIMRMHNIDPVLADKAVGFLHAIMWGAPGYLFFQVLRNQCEGLSKTKPGMVIGFIGLLVNIPINYIFIYGKFGAPALGGVGCGVATGTVYWVMFLMMRWYVTRARSQQDIKLEKGFAAPDWQVMKRLGGLGLPVALALFFEVTLFAVVALLVSPLGIVAVAGHQIALNFSSLMFMLPMSLSVAATIRVGFRLGQGSVDDARVAAYTSIAVGLMLACVTAIFTVVFREHIALLYNKTPEVVVMASHLMLLAALYQLSDAIQVIGSGVLRGYKDTRSIFFITFTAYWLLGLPSGYLLGLTDYIVPAMGPSGFWIGFVIGLTSAAILMALRIRWLQKQPSAFILQKAAH</sequence>
<reference key="1">
    <citation type="journal article" date="2006" name="PLoS Genet.">
        <title>The complete genome sequence and comparative genome analysis of the high pathogenicity Yersinia enterocolitica strain 8081.</title>
        <authorList>
            <person name="Thomson N.R."/>
            <person name="Howard S."/>
            <person name="Wren B.W."/>
            <person name="Holden M.T.G."/>
            <person name="Crossman L."/>
            <person name="Challis G.L."/>
            <person name="Churcher C."/>
            <person name="Mungall K."/>
            <person name="Brooks K."/>
            <person name="Chillingworth T."/>
            <person name="Feltwell T."/>
            <person name="Abdellah Z."/>
            <person name="Hauser H."/>
            <person name="Jagels K."/>
            <person name="Maddison M."/>
            <person name="Moule S."/>
            <person name="Sanders M."/>
            <person name="Whitehead S."/>
            <person name="Quail M.A."/>
            <person name="Dougan G."/>
            <person name="Parkhill J."/>
            <person name="Prentice M.B."/>
        </authorList>
    </citation>
    <scope>NUCLEOTIDE SEQUENCE [LARGE SCALE GENOMIC DNA]</scope>
    <source>
        <strain>NCTC 13174 / 8081</strain>
    </source>
</reference>
<comment type="function">
    <text evidence="1">Multidrug efflux pump that functions probably as a Na(+)/drug antiporter.</text>
</comment>
<comment type="subcellular location">
    <subcellularLocation>
        <location evidence="1">Cell inner membrane</location>
        <topology evidence="1">Multi-pass membrane protein</topology>
    </subcellularLocation>
</comment>
<comment type="similarity">
    <text evidence="1">Belongs to the multi antimicrobial extrusion (MATE) (TC 2.A.66.1) family. MdtK subfamily.</text>
</comment>